<accession>Q47WM2</accession>
<organism>
    <name type="scientific">Colwellia psychrerythraea (strain 34H / ATCC BAA-681)</name>
    <name type="common">Vibrio psychroerythus</name>
    <dbReference type="NCBI Taxonomy" id="167879"/>
    <lineage>
        <taxon>Bacteria</taxon>
        <taxon>Pseudomonadati</taxon>
        <taxon>Pseudomonadota</taxon>
        <taxon>Gammaproteobacteria</taxon>
        <taxon>Alteromonadales</taxon>
        <taxon>Colwelliaceae</taxon>
        <taxon>Colwellia</taxon>
    </lineage>
</organism>
<comment type="function">
    <text evidence="2">Catalyzes the formation of N(7)-methylguanine at position 46 (m7G46) in tRNA.</text>
</comment>
<comment type="catalytic activity">
    <reaction evidence="2">
        <text>guanosine(46) in tRNA + S-adenosyl-L-methionine = N(7)-methylguanosine(46) in tRNA + S-adenosyl-L-homocysteine</text>
        <dbReference type="Rhea" id="RHEA:42708"/>
        <dbReference type="Rhea" id="RHEA-COMP:10188"/>
        <dbReference type="Rhea" id="RHEA-COMP:10189"/>
        <dbReference type="ChEBI" id="CHEBI:57856"/>
        <dbReference type="ChEBI" id="CHEBI:59789"/>
        <dbReference type="ChEBI" id="CHEBI:74269"/>
        <dbReference type="ChEBI" id="CHEBI:74480"/>
        <dbReference type="EC" id="2.1.1.33"/>
    </reaction>
</comment>
<comment type="pathway">
    <text evidence="2">tRNA modification; N(7)-methylguanine-tRNA biosynthesis.</text>
</comment>
<comment type="similarity">
    <text evidence="2">Belongs to the class I-like SAM-binding methyltransferase superfamily. TrmB family.</text>
</comment>
<reference key="1">
    <citation type="journal article" date="2005" name="Proc. Natl. Acad. Sci. U.S.A.">
        <title>The psychrophilic lifestyle as revealed by the genome sequence of Colwellia psychrerythraea 34H through genomic and proteomic analyses.</title>
        <authorList>
            <person name="Methe B.A."/>
            <person name="Nelson K.E."/>
            <person name="Deming J.W."/>
            <person name="Momen B."/>
            <person name="Melamud E."/>
            <person name="Zhang X."/>
            <person name="Moult J."/>
            <person name="Madupu R."/>
            <person name="Nelson W.C."/>
            <person name="Dodson R.J."/>
            <person name="Brinkac L.M."/>
            <person name="Daugherty S.C."/>
            <person name="Durkin A.S."/>
            <person name="DeBoy R.T."/>
            <person name="Kolonay J.F."/>
            <person name="Sullivan S.A."/>
            <person name="Zhou L."/>
            <person name="Davidsen T.M."/>
            <person name="Wu M."/>
            <person name="Huston A.L."/>
            <person name="Lewis M."/>
            <person name="Weaver B."/>
            <person name="Weidman J.F."/>
            <person name="Khouri H."/>
            <person name="Utterback T.R."/>
            <person name="Feldblyum T.V."/>
            <person name="Fraser C.M."/>
        </authorList>
    </citation>
    <scope>NUCLEOTIDE SEQUENCE [LARGE SCALE GENOMIC DNA]</scope>
    <source>
        <strain>34H / ATCC BAA-681</strain>
    </source>
</reference>
<keyword id="KW-0489">Methyltransferase</keyword>
<keyword id="KW-0949">S-adenosyl-L-methionine</keyword>
<keyword id="KW-0808">Transferase</keyword>
<keyword id="KW-0819">tRNA processing</keyword>
<evidence type="ECO:0000250" key="1"/>
<evidence type="ECO:0000255" key="2">
    <source>
        <dbReference type="HAMAP-Rule" id="MF_01057"/>
    </source>
</evidence>
<feature type="chain" id="PRO_0000229161" description="tRNA (guanine-N(7)-)-methyltransferase">
    <location>
        <begin position="1"/>
        <end position="244"/>
    </location>
</feature>
<feature type="active site" evidence="1">
    <location>
        <position position="149"/>
    </location>
</feature>
<feature type="binding site" evidence="2">
    <location>
        <position position="74"/>
    </location>
    <ligand>
        <name>S-adenosyl-L-methionine</name>
        <dbReference type="ChEBI" id="CHEBI:59789"/>
    </ligand>
</feature>
<feature type="binding site" evidence="2">
    <location>
        <position position="99"/>
    </location>
    <ligand>
        <name>S-adenosyl-L-methionine</name>
        <dbReference type="ChEBI" id="CHEBI:59789"/>
    </ligand>
</feature>
<feature type="binding site" evidence="2">
    <location>
        <position position="126"/>
    </location>
    <ligand>
        <name>S-adenosyl-L-methionine</name>
        <dbReference type="ChEBI" id="CHEBI:59789"/>
    </ligand>
</feature>
<feature type="binding site" evidence="2">
    <location>
        <position position="149"/>
    </location>
    <ligand>
        <name>S-adenosyl-L-methionine</name>
        <dbReference type="ChEBI" id="CHEBI:59789"/>
    </ligand>
</feature>
<feature type="binding site" evidence="2">
    <location>
        <position position="153"/>
    </location>
    <ligand>
        <name>substrate</name>
    </ligand>
</feature>
<feature type="binding site" evidence="2">
    <location>
        <position position="185"/>
    </location>
    <ligand>
        <name>substrate</name>
    </ligand>
</feature>
<feature type="binding site" evidence="2">
    <location>
        <begin position="222"/>
        <end position="225"/>
    </location>
    <ligand>
        <name>substrate</name>
    </ligand>
</feature>
<proteinExistence type="inferred from homology"/>
<name>TRMB_COLP3</name>
<sequence>MTEKNEKTHKTIEQAEQEGKYIRKVRSFVKREGRLTNNQERAINDHWQTMGLNHSDGVIDAPTLFANENPVVLEIGFGMGKSLVEMAKAAPELNFIGIEVHKPGVGACISSAVEESVSNLKVCEHDAIEILADCIPDDTLTTVQLFFPDPWHKKKHHKRRIVSAEFVETIRQKLKVGGVFHMATDWENYAECMLEDMQSAPGYNNLSESNDYVPRPDSRPLTKFENRGQNLGHGVWDLQFAKKA</sequence>
<dbReference type="EC" id="2.1.1.33" evidence="2"/>
<dbReference type="EMBL" id="CP000083">
    <property type="protein sequence ID" value="AAZ24387.1"/>
    <property type="molecule type" value="Genomic_DNA"/>
</dbReference>
<dbReference type="RefSeq" id="WP_011044881.1">
    <property type="nucleotide sequence ID" value="NC_003910.7"/>
</dbReference>
<dbReference type="SMR" id="Q47WM2"/>
<dbReference type="STRING" id="167879.CPS_4146"/>
<dbReference type="KEGG" id="cps:CPS_4146"/>
<dbReference type="eggNOG" id="COG0220">
    <property type="taxonomic scope" value="Bacteria"/>
</dbReference>
<dbReference type="HOGENOM" id="CLU_050910_0_1_6"/>
<dbReference type="UniPathway" id="UPA00989"/>
<dbReference type="Proteomes" id="UP000000547">
    <property type="component" value="Chromosome"/>
</dbReference>
<dbReference type="GO" id="GO:0043527">
    <property type="term" value="C:tRNA methyltransferase complex"/>
    <property type="evidence" value="ECO:0007669"/>
    <property type="project" value="TreeGrafter"/>
</dbReference>
<dbReference type="GO" id="GO:0008176">
    <property type="term" value="F:tRNA (guanine(46)-N7)-methyltransferase activity"/>
    <property type="evidence" value="ECO:0007669"/>
    <property type="project" value="UniProtKB-UniRule"/>
</dbReference>
<dbReference type="FunFam" id="3.40.50.150:FF:000024">
    <property type="entry name" value="tRNA (guanine-N(7)-)-methyltransferase"/>
    <property type="match status" value="1"/>
</dbReference>
<dbReference type="Gene3D" id="3.40.50.150">
    <property type="entry name" value="Vaccinia Virus protein VP39"/>
    <property type="match status" value="1"/>
</dbReference>
<dbReference type="HAMAP" id="MF_01057">
    <property type="entry name" value="tRNA_methyltr_TrmB"/>
    <property type="match status" value="1"/>
</dbReference>
<dbReference type="InterPro" id="IPR029063">
    <property type="entry name" value="SAM-dependent_MTases_sf"/>
</dbReference>
<dbReference type="InterPro" id="IPR003358">
    <property type="entry name" value="tRNA_(Gua-N-7)_MeTrfase_Trmb"/>
</dbReference>
<dbReference type="InterPro" id="IPR055361">
    <property type="entry name" value="tRNA_methyltr_TrmB_bact"/>
</dbReference>
<dbReference type="NCBIfam" id="TIGR00091">
    <property type="entry name" value="tRNA (guanosine(46)-N7)-methyltransferase TrmB"/>
    <property type="match status" value="1"/>
</dbReference>
<dbReference type="PANTHER" id="PTHR23417">
    <property type="entry name" value="3-DEOXY-D-MANNO-OCTULOSONIC-ACID TRANSFERASE/TRNA GUANINE-N 7 - -METHYLTRANSFERASE"/>
    <property type="match status" value="1"/>
</dbReference>
<dbReference type="PANTHER" id="PTHR23417:SF14">
    <property type="entry name" value="PENTACOTRIPEPTIDE-REPEAT REGION OF PRORP DOMAIN-CONTAINING PROTEIN"/>
    <property type="match status" value="1"/>
</dbReference>
<dbReference type="Pfam" id="PF02390">
    <property type="entry name" value="Methyltransf_4"/>
    <property type="match status" value="1"/>
</dbReference>
<dbReference type="SUPFAM" id="SSF53335">
    <property type="entry name" value="S-adenosyl-L-methionine-dependent methyltransferases"/>
    <property type="match status" value="1"/>
</dbReference>
<dbReference type="PROSITE" id="PS51625">
    <property type="entry name" value="SAM_MT_TRMB"/>
    <property type="match status" value="1"/>
</dbReference>
<gene>
    <name evidence="2" type="primary">trmB</name>
    <name type="ordered locus">CPS_4146</name>
</gene>
<protein>
    <recommendedName>
        <fullName evidence="2">tRNA (guanine-N(7)-)-methyltransferase</fullName>
        <ecNumber evidence="2">2.1.1.33</ecNumber>
    </recommendedName>
    <alternativeName>
        <fullName evidence="2">tRNA (guanine(46)-N(7))-methyltransferase</fullName>
    </alternativeName>
    <alternativeName>
        <fullName evidence="2">tRNA(m7G46)-methyltransferase</fullName>
    </alternativeName>
</protein>